<protein>
    <recommendedName>
        <fullName evidence="1">Triplex capsid protein 1</fullName>
    </recommendedName>
</protein>
<organismHost>
    <name type="scientific">Homo sapiens</name>
    <name type="common">Human</name>
    <dbReference type="NCBI Taxonomy" id="9606"/>
</organismHost>
<dbReference type="EMBL" id="AY446894">
    <property type="protein sequence ID" value="AAR31610.1"/>
    <property type="molecule type" value="Genomic_DNA"/>
</dbReference>
<dbReference type="RefSeq" id="YP_081504.1">
    <property type="nucleotide sequence ID" value="NC_006273.2"/>
</dbReference>
<dbReference type="SMR" id="F5HA93"/>
<dbReference type="GeneID" id="3077431"/>
<dbReference type="KEGG" id="vg:3077431"/>
<dbReference type="Reactome" id="R-HSA-9609690">
    <property type="pathway name" value="HCMV Early Events"/>
</dbReference>
<dbReference type="Reactome" id="R-HSA-9610379">
    <property type="pathway name" value="HCMV Late Events"/>
</dbReference>
<dbReference type="Proteomes" id="UP000000938">
    <property type="component" value="Segment"/>
</dbReference>
<dbReference type="GO" id="GO:0042025">
    <property type="term" value="C:host cell nucleus"/>
    <property type="evidence" value="ECO:0007669"/>
    <property type="project" value="UniProtKB-SubCell"/>
</dbReference>
<dbReference type="GO" id="GO:0019028">
    <property type="term" value="C:viral capsid"/>
    <property type="evidence" value="ECO:0000304"/>
    <property type="project" value="Reactome"/>
</dbReference>
<dbReference type="GO" id="GO:0003677">
    <property type="term" value="F:DNA binding"/>
    <property type="evidence" value="ECO:0007669"/>
    <property type="project" value="InterPro"/>
</dbReference>
<dbReference type="GO" id="GO:0019069">
    <property type="term" value="P:viral capsid assembly"/>
    <property type="evidence" value="ECO:0007669"/>
    <property type="project" value="InterPro"/>
</dbReference>
<dbReference type="HAMAP" id="MF_04018">
    <property type="entry name" value="HSV_TRX1"/>
    <property type="match status" value="1"/>
</dbReference>
<dbReference type="InterPro" id="IPR004999">
    <property type="entry name" value="Herpes_1"/>
</dbReference>
<dbReference type="Pfam" id="PF03327">
    <property type="entry name" value="Herpes_VP19C"/>
    <property type="match status" value="1"/>
</dbReference>
<sequence>MDARAVAKRPRDPADEDNELVTALKAKREVNTISVRYLYHADHQALTARFFVPEGLVEFEAQPGALLIRMETGCDSPRHLYISLYLLGIRASNVSASTRCLLESVYTASAARAALQWLDLGPHLLHRRLETLGCVKTVSLGITSLLTCVMRGYLYNTLKTEVFALMIPKDMYLTWEETRGRLQYVYLIIVYDYDGPETRPGIYVLTSSIAHWQTLVDVARGKFARERCSFVNRRITRPRQIPLCTGVIQKLGWCLADDIHTSFLVHKELKLSVVRLDNFSVELGDFREFV</sequence>
<name>TRX1_HCMVM</name>
<evidence type="ECO:0000255" key="1">
    <source>
        <dbReference type="HAMAP-Rule" id="MF_04018"/>
    </source>
</evidence>
<organism>
    <name type="scientific">Human cytomegalovirus (strain Merlin)</name>
    <name type="common">HHV-5</name>
    <name type="synonym">Human herpesvirus 5</name>
    <dbReference type="NCBI Taxonomy" id="295027"/>
    <lineage>
        <taxon>Viruses</taxon>
        <taxon>Duplodnaviria</taxon>
        <taxon>Heunggongvirae</taxon>
        <taxon>Peploviricota</taxon>
        <taxon>Herviviricetes</taxon>
        <taxon>Herpesvirales</taxon>
        <taxon>Orthoherpesviridae</taxon>
        <taxon>Betaherpesvirinae</taxon>
        <taxon>Cytomegalovirus</taxon>
        <taxon>Cytomegalovirus humanbeta5</taxon>
        <taxon>Human cytomegalovirus</taxon>
    </lineage>
</organism>
<gene>
    <name evidence="1" type="primary">TRX1</name>
    <name type="ordered locus">UL46</name>
</gene>
<feature type="chain" id="PRO_0000418256" description="Triplex capsid protein 1">
    <location>
        <begin position="1"/>
        <end position="290"/>
    </location>
</feature>
<keyword id="KW-0167">Capsid protein</keyword>
<keyword id="KW-1048">Host nucleus</keyword>
<keyword id="KW-1185">Reference proteome</keyword>
<keyword id="KW-0946">Virion</keyword>
<comment type="function">
    <text evidence="1">Structural component of the T=16 icosahedral capsid. The capsid is composed of pentamers and hexamers of major capsid protein/MCP, which are linked together by heterotrimers called triplexes. These triplexes are formed by a single molecule of triplex protein 1/TRX1 and two copies of triplex protein 2/TRX2. Additionally, TRX1 is required for efficient transport of TRX2 to the nucleus, which is the site of capsid assembly.</text>
</comment>
<comment type="subunit">
    <text evidence="1">Interacts with TRX2, MCP and capsid vertex component 2/CVC2.</text>
</comment>
<comment type="subcellular location">
    <subcellularLocation>
        <location evidence="1">Virion</location>
    </subcellularLocation>
    <subcellularLocation>
        <location evidence="1">Host nucleus</location>
    </subcellularLocation>
</comment>
<comment type="similarity">
    <text evidence="1">Belongs to the herpesviridae TRX1 protein family.</text>
</comment>
<proteinExistence type="inferred from homology"/>
<accession>F5HA93</accession>
<reference key="1">
    <citation type="journal article" date="2004" name="J. Gen. Virol.">
        <title>Genetic content of wild-type human cytomegalovirus.</title>
        <authorList>
            <person name="Dolan A."/>
            <person name="Cunningham C."/>
            <person name="Hector R.D."/>
            <person name="Hassan-Walker A.F."/>
            <person name="Lee L."/>
            <person name="Addison C."/>
            <person name="Dargan D.J."/>
            <person name="McGeoch D.J."/>
            <person name="Gatherer D."/>
            <person name="Emery V.C."/>
            <person name="Griffiths P.D."/>
            <person name="Sinzger C."/>
            <person name="McSharry B.P."/>
            <person name="Wilkinson G.W.G."/>
            <person name="Davison A.J."/>
        </authorList>
    </citation>
    <scope>NUCLEOTIDE SEQUENCE [LARGE SCALE GENOMIC DNA]</scope>
</reference>